<name>NOM1_MOUSE</name>
<proteinExistence type="evidence at protein level"/>
<evidence type="ECO:0000250" key="1"/>
<evidence type="ECO:0000250" key="2">
    <source>
        <dbReference type="UniProtKB" id="Q5C9Z4"/>
    </source>
</evidence>
<evidence type="ECO:0000255" key="3">
    <source>
        <dbReference type="PROSITE-ProRule" id="PRU00698"/>
    </source>
</evidence>
<evidence type="ECO:0000256" key="4">
    <source>
        <dbReference type="SAM" id="MobiDB-lite"/>
    </source>
</evidence>
<evidence type="ECO:0000305" key="5"/>
<evidence type="ECO:0007744" key="6">
    <source>
    </source>
</evidence>
<organism>
    <name type="scientific">Mus musculus</name>
    <name type="common">Mouse</name>
    <dbReference type="NCBI Taxonomy" id="10090"/>
    <lineage>
        <taxon>Eukaryota</taxon>
        <taxon>Metazoa</taxon>
        <taxon>Chordata</taxon>
        <taxon>Craniata</taxon>
        <taxon>Vertebrata</taxon>
        <taxon>Euteleostomi</taxon>
        <taxon>Mammalia</taxon>
        <taxon>Eutheria</taxon>
        <taxon>Euarchontoglires</taxon>
        <taxon>Glires</taxon>
        <taxon>Rodentia</taxon>
        <taxon>Myomorpha</taxon>
        <taxon>Muroidea</taxon>
        <taxon>Muridae</taxon>
        <taxon>Murinae</taxon>
        <taxon>Mus</taxon>
        <taxon>Mus</taxon>
    </lineage>
</organism>
<dbReference type="EMBL" id="AK148406">
    <property type="protein sequence ID" value="BAE28535.1"/>
    <property type="molecule type" value="mRNA"/>
</dbReference>
<dbReference type="EMBL" id="AC171500">
    <property type="status" value="NOT_ANNOTATED_CDS"/>
    <property type="molecule type" value="Genomic_DNA"/>
</dbReference>
<dbReference type="CCDS" id="CCDS19149.1"/>
<dbReference type="RefSeq" id="NP_001028629.2">
    <property type="nucleotide sequence ID" value="NM_001033457.2"/>
</dbReference>
<dbReference type="SMR" id="Q3UFM5"/>
<dbReference type="BioGRID" id="241474">
    <property type="interactions" value="2"/>
</dbReference>
<dbReference type="FunCoup" id="Q3UFM5">
    <property type="interactions" value="2723"/>
</dbReference>
<dbReference type="STRING" id="10090.ENSMUSP00000001611"/>
<dbReference type="GlyGen" id="Q3UFM5">
    <property type="glycosylation" value="2 sites"/>
</dbReference>
<dbReference type="iPTMnet" id="Q3UFM5"/>
<dbReference type="PhosphoSitePlus" id="Q3UFM5"/>
<dbReference type="PaxDb" id="10090-ENSMUSP00000001611"/>
<dbReference type="PeptideAtlas" id="Q3UFM5"/>
<dbReference type="ProteomicsDB" id="293700"/>
<dbReference type="Pumba" id="Q3UFM5"/>
<dbReference type="Antibodypedia" id="56748">
    <property type="antibodies" value="64 antibodies from 19 providers"/>
</dbReference>
<dbReference type="Ensembl" id="ENSMUST00000001611.11">
    <property type="protein sequence ID" value="ENSMUSP00000001611.10"/>
    <property type="gene ID" value="ENSMUSG00000001569.11"/>
</dbReference>
<dbReference type="GeneID" id="433864"/>
<dbReference type="KEGG" id="mmu:433864"/>
<dbReference type="UCSC" id="uc008wuj.1">
    <property type="organism name" value="mouse"/>
</dbReference>
<dbReference type="AGR" id="MGI:1861749"/>
<dbReference type="CTD" id="64434"/>
<dbReference type="MGI" id="MGI:1861749">
    <property type="gene designation" value="Nom1"/>
</dbReference>
<dbReference type="VEuPathDB" id="HostDB:ENSMUSG00000001569"/>
<dbReference type="eggNOG" id="KOG2141">
    <property type="taxonomic scope" value="Eukaryota"/>
</dbReference>
<dbReference type="GeneTree" id="ENSGT00940000153458"/>
<dbReference type="HOGENOM" id="CLU_006786_0_1_1"/>
<dbReference type="InParanoid" id="Q3UFM5"/>
<dbReference type="OMA" id="FMVDILN"/>
<dbReference type="OrthoDB" id="10260961at2759"/>
<dbReference type="PhylomeDB" id="Q3UFM5"/>
<dbReference type="TreeFam" id="TF312808"/>
<dbReference type="BioGRID-ORCS" id="433864">
    <property type="hits" value="23 hits in 81 CRISPR screens"/>
</dbReference>
<dbReference type="ChiTaRS" id="Nom1">
    <property type="organism name" value="mouse"/>
</dbReference>
<dbReference type="PRO" id="PR:Q3UFM5"/>
<dbReference type="Proteomes" id="UP000000589">
    <property type="component" value="Chromosome 5"/>
</dbReference>
<dbReference type="RNAct" id="Q3UFM5">
    <property type="molecule type" value="protein"/>
</dbReference>
<dbReference type="Bgee" id="ENSMUSG00000001569">
    <property type="expression patterns" value="Expressed in spermatocyte and 80 other cell types or tissues"/>
</dbReference>
<dbReference type="GO" id="GO:0005730">
    <property type="term" value="C:nucleolus"/>
    <property type="evidence" value="ECO:0000250"/>
    <property type="project" value="UniProtKB"/>
</dbReference>
<dbReference type="GO" id="GO:0003723">
    <property type="term" value="F:RNA binding"/>
    <property type="evidence" value="ECO:0007669"/>
    <property type="project" value="InterPro"/>
</dbReference>
<dbReference type="GO" id="GO:0048820">
    <property type="term" value="P:hair follicle maturation"/>
    <property type="evidence" value="ECO:0000315"/>
    <property type="project" value="MGI"/>
</dbReference>
<dbReference type="FunFam" id="1.25.40.180:FF:000032">
    <property type="entry name" value="Nucleolar MIF4G domain-containing protein 1"/>
    <property type="match status" value="1"/>
</dbReference>
<dbReference type="Gene3D" id="1.25.40.180">
    <property type="match status" value="1"/>
</dbReference>
<dbReference type="InterPro" id="IPR016024">
    <property type="entry name" value="ARM-type_fold"/>
</dbReference>
<dbReference type="InterPro" id="IPR050781">
    <property type="entry name" value="CWC22_splicing_factor"/>
</dbReference>
<dbReference type="InterPro" id="IPR003891">
    <property type="entry name" value="Initiation_fac_eIF4g_MI"/>
</dbReference>
<dbReference type="InterPro" id="IPR003890">
    <property type="entry name" value="MIF4G-like_typ-3"/>
</dbReference>
<dbReference type="PANTHER" id="PTHR18034">
    <property type="entry name" value="CELL CYCLE CONTROL PROTEIN CWF22-RELATED"/>
    <property type="match status" value="1"/>
</dbReference>
<dbReference type="PANTHER" id="PTHR18034:SF4">
    <property type="entry name" value="NUCLEOLAR MIF4G DOMAIN-CONTAINING PROTEIN 1"/>
    <property type="match status" value="1"/>
</dbReference>
<dbReference type="Pfam" id="PF02847">
    <property type="entry name" value="MA3"/>
    <property type="match status" value="1"/>
</dbReference>
<dbReference type="Pfam" id="PF02854">
    <property type="entry name" value="MIF4G"/>
    <property type="match status" value="1"/>
</dbReference>
<dbReference type="SMART" id="SM00544">
    <property type="entry name" value="MA3"/>
    <property type="match status" value="1"/>
</dbReference>
<dbReference type="SMART" id="SM00543">
    <property type="entry name" value="MIF4G"/>
    <property type="match status" value="1"/>
</dbReference>
<dbReference type="SUPFAM" id="SSF48371">
    <property type="entry name" value="ARM repeat"/>
    <property type="match status" value="1"/>
</dbReference>
<dbReference type="PROSITE" id="PS51366">
    <property type="entry name" value="MI"/>
    <property type="match status" value="1"/>
</dbReference>
<feature type="chain" id="PRO_0000286824" description="Nucleolar MIF4G domain-containing protein 1">
    <location>
        <begin position="1"/>
        <end position="854"/>
    </location>
</feature>
<feature type="domain" description="MIF4G" evidence="3">
    <location>
        <begin position="356"/>
        <end position="553"/>
    </location>
</feature>
<feature type="domain" description="MI" evidence="3">
    <location>
        <begin position="648"/>
        <end position="764"/>
    </location>
</feature>
<feature type="region of interest" description="Necessary for nucleolar localization and for targeting PPP1CA to the nucleolus" evidence="1">
    <location>
        <begin position="2"/>
        <end position="275"/>
    </location>
</feature>
<feature type="region of interest" description="Disordered" evidence="4">
    <location>
        <begin position="66"/>
        <end position="215"/>
    </location>
</feature>
<feature type="region of interest" description="Disordered" evidence="4">
    <location>
        <begin position="231"/>
        <end position="333"/>
    </location>
</feature>
<feature type="short sequence motif" description="Required for efficient binding to PPP1CA and for targeting PPP1CA to the nucleolus" evidence="1">
    <location>
        <begin position="301"/>
        <end position="304"/>
    </location>
</feature>
<feature type="compositionally biased region" description="Basic residues" evidence="4">
    <location>
        <begin position="76"/>
        <end position="99"/>
    </location>
</feature>
<feature type="compositionally biased region" description="Gly residues" evidence="4">
    <location>
        <begin position="104"/>
        <end position="113"/>
    </location>
</feature>
<feature type="compositionally biased region" description="Low complexity" evidence="4">
    <location>
        <begin position="128"/>
        <end position="173"/>
    </location>
</feature>
<feature type="compositionally biased region" description="Basic and acidic residues" evidence="4">
    <location>
        <begin position="188"/>
        <end position="197"/>
    </location>
</feature>
<feature type="compositionally biased region" description="Acidic residues" evidence="4">
    <location>
        <begin position="265"/>
        <end position="280"/>
    </location>
</feature>
<feature type="compositionally biased region" description="Basic and acidic residues" evidence="4">
    <location>
        <begin position="281"/>
        <end position="291"/>
    </location>
</feature>
<feature type="compositionally biased region" description="Basic and acidic residues" evidence="4">
    <location>
        <begin position="303"/>
        <end position="315"/>
    </location>
</feature>
<feature type="compositionally biased region" description="Basic and acidic residues" evidence="4">
    <location>
        <begin position="322"/>
        <end position="331"/>
    </location>
</feature>
<feature type="modified residue" description="Phosphoserine" evidence="2">
    <location>
        <position position="60"/>
    </location>
</feature>
<feature type="modified residue" description="Phosphoserine" evidence="2">
    <location>
        <position position="311"/>
    </location>
</feature>
<feature type="modified residue" description="Phosphoserine" evidence="6">
    <location>
        <position position="314"/>
    </location>
</feature>
<feature type="modified residue" description="Phosphoserine" evidence="6">
    <location>
        <position position="315"/>
    </location>
</feature>
<feature type="sequence conflict" description="In Ref. 1; BAE28535." evidence="5" ref="1">
    <original>E</original>
    <variation>D</variation>
    <location>
        <position position="309"/>
    </location>
</feature>
<reference key="1">
    <citation type="journal article" date="2005" name="Science">
        <title>The transcriptional landscape of the mammalian genome.</title>
        <authorList>
            <person name="Carninci P."/>
            <person name="Kasukawa T."/>
            <person name="Katayama S."/>
            <person name="Gough J."/>
            <person name="Frith M.C."/>
            <person name="Maeda N."/>
            <person name="Oyama R."/>
            <person name="Ravasi T."/>
            <person name="Lenhard B."/>
            <person name="Wells C."/>
            <person name="Kodzius R."/>
            <person name="Shimokawa K."/>
            <person name="Bajic V.B."/>
            <person name="Brenner S.E."/>
            <person name="Batalov S."/>
            <person name="Forrest A.R."/>
            <person name="Zavolan M."/>
            <person name="Davis M.J."/>
            <person name="Wilming L.G."/>
            <person name="Aidinis V."/>
            <person name="Allen J.E."/>
            <person name="Ambesi-Impiombato A."/>
            <person name="Apweiler R."/>
            <person name="Aturaliya R.N."/>
            <person name="Bailey T.L."/>
            <person name="Bansal M."/>
            <person name="Baxter L."/>
            <person name="Beisel K.W."/>
            <person name="Bersano T."/>
            <person name="Bono H."/>
            <person name="Chalk A.M."/>
            <person name="Chiu K.P."/>
            <person name="Choudhary V."/>
            <person name="Christoffels A."/>
            <person name="Clutterbuck D.R."/>
            <person name="Crowe M.L."/>
            <person name="Dalla E."/>
            <person name="Dalrymple B.P."/>
            <person name="de Bono B."/>
            <person name="Della Gatta G."/>
            <person name="di Bernardo D."/>
            <person name="Down T."/>
            <person name="Engstrom P."/>
            <person name="Fagiolini M."/>
            <person name="Faulkner G."/>
            <person name="Fletcher C.F."/>
            <person name="Fukushima T."/>
            <person name="Furuno M."/>
            <person name="Futaki S."/>
            <person name="Gariboldi M."/>
            <person name="Georgii-Hemming P."/>
            <person name="Gingeras T.R."/>
            <person name="Gojobori T."/>
            <person name="Green R.E."/>
            <person name="Gustincich S."/>
            <person name="Harbers M."/>
            <person name="Hayashi Y."/>
            <person name="Hensch T.K."/>
            <person name="Hirokawa N."/>
            <person name="Hill D."/>
            <person name="Huminiecki L."/>
            <person name="Iacono M."/>
            <person name="Ikeo K."/>
            <person name="Iwama A."/>
            <person name="Ishikawa T."/>
            <person name="Jakt M."/>
            <person name="Kanapin A."/>
            <person name="Katoh M."/>
            <person name="Kawasawa Y."/>
            <person name="Kelso J."/>
            <person name="Kitamura H."/>
            <person name="Kitano H."/>
            <person name="Kollias G."/>
            <person name="Krishnan S.P."/>
            <person name="Kruger A."/>
            <person name="Kummerfeld S.K."/>
            <person name="Kurochkin I.V."/>
            <person name="Lareau L.F."/>
            <person name="Lazarevic D."/>
            <person name="Lipovich L."/>
            <person name="Liu J."/>
            <person name="Liuni S."/>
            <person name="McWilliam S."/>
            <person name="Madan Babu M."/>
            <person name="Madera M."/>
            <person name="Marchionni L."/>
            <person name="Matsuda H."/>
            <person name="Matsuzawa S."/>
            <person name="Miki H."/>
            <person name="Mignone F."/>
            <person name="Miyake S."/>
            <person name="Morris K."/>
            <person name="Mottagui-Tabar S."/>
            <person name="Mulder N."/>
            <person name="Nakano N."/>
            <person name="Nakauchi H."/>
            <person name="Ng P."/>
            <person name="Nilsson R."/>
            <person name="Nishiguchi S."/>
            <person name="Nishikawa S."/>
            <person name="Nori F."/>
            <person name="Ohara O."/>
            <person name="Okazaki Y."/>
            <person name="Orlando V."/>
            <person name="Pang K.C."/>
            <person name="Pavan W.J."/>
            <person name="Pavesi G."/>
            <person name="Pesole G."/>
            <person name="Petrovsky N."/>
            <person name="Piazza S."/>
            <person name="Reed J."/>
            <person name="Reid J.F."/>
            <person name="Ring B.Z."/>
            <person name="Ringwald M."/>
            <person name="Rost B."/>
            <person name="Ruan Y."/>
            <person name="Salzberg S.L."/>
            <person name="Sandelin A."/>
            <person name="Schneider C."/>
            <person name="Schoenbach C."/>
            <person name="Sekiguchi K."/>
            <person name="Semple C.A."/>
            <person name="Seno S."/>
            <person name="Sessa L."/>
            <person name="Sheng Y."/>
            <person name="Shibata Y."/>
            <person name="Shimada H."/>
            <person name="Shimada K."/>
            <person name="Silva D."/>
            <person name="Sinclair B."/>
            <person name="Sperling S."/>
            <person name="Stupka E."/>
            <person name="Sugiura K."/>
            <person name="Sultana R."/>
            <person name="Takenaka Y."/>
            <person name="Taki K."/>
            <person name="Tammoja K."/>
            <person name="Tan S.L."/>
            <person name="Tang S."/>
            <person name="Taylor M.S."/>
            <person name="Tegner J."/>
            <person name="Teichmann S.A."/>
            <person name="Ueda H.R."/>
            <person name="van Nimwegen E."/>
            <person name="Verardo R."/>
            <person name="Wei C.L."/>
            <person name="Yagi K."/>
            <person name="Yamanishi H."/>
            <person name="Zabarovsky E."/>
            <person name="Zhu S."/>
            <person name="Zimmer A."/>
            <person name="Hide W."/>
            <person name="Bult C."/>
            <person name="Grimmond S.M."/>
            <person name="Teasdale R.D."/>
            <person name="Liu E.T."/>
            <person name="Brusic V."/>
            <person name="Quackenbush J."/>
            <person name="Wahlestedt C."/>
            <person name="Mattick J.S."/>
            <person name="Hume D.A."/>
            <person name="Kai C."/>
            <person name="Sasaki D."/>
            <person name="Tomaru Y."/>
            <person name="Fukuda S."/>
            <person name="Kanamori-Katayama M."/>
            <person name="Suzuki M."/>
            <person name="Aoki J."/>
            <person name="Arakawa T."/>
            <person name="Iida J."/>
            <person name="Imamura K."/>
            <person name="Itoh M."/>
            <person name="Kato T."/>
            <person name="Kawaji H."/>
            <person name="Kawagashira N."/>
            <person name="Kawashima T."/>
            <person name="Kojima M."/>
            <person name="Kondo S."/>
            <person name="Konno H."/>
            <person name="Nakano K."/>
            <person name="Ninomiya N."/>
            <person name="Nishio T."/>
            <person name="Okada M."/>
            <person name="Plessy C."/>
            <person name="Shibata K."/>
            <person name="Shiraki T."/>
            <person name="Suzuki S."/>
            <person name="Tagami M."/>
            <person name="Waki K."/>
            <person name="Watahiki A."/>
            <person name="Okamura-Oho Y."/>
            <person name="Suzuki H."/>
            <person name="Kawai J."/>
            <person name="Hayashizaki Y."/>
        </authorList>
    </citation>
    <scope>NUCLEOTIDE SEQUENCE [LARGE SCALE MRNA]</scope>
    <source>
        <strain>C57BL/6J</strain>
    </source>
</reference>
<reference key="2">
    <citation type="journal article" date="2009" name="PLoS Biol.">
        <title>Lineage-specific biology revealed by a finished genome assembly of the mouse.</title>
        <authorList>
            <person name="Church D.M."/>
            <person name="Goodstadt L."/>
            <person name="Hillier L.W."/>
            <person name="Zody M.C."/>
            <person name="Goldstein S."/>
            <person name="She X."/>
            <person name="Bult C.J."/>
            <person name="Agarwala R."/>
            <person name="Cherry J.L."/>
            <person name="DiCuccio M."/>
            <person name="Hlavina W."/>
            <person name="Kapustin Y."/>
            <person name="Meric P."/>
            <person name="Maglott D."/>
            <person name="Birtle Z."/>
            <person name="Marques A.C."/>
            <person name="Graves T."/>
            <person name="Zhou S."/>
            <person name="Teague B."/>
            <person name="Potamousis K."/>
            <person name="Churas C."/>
            <person name="Place M."/>
            <person name="Herschleb J."/>
            <person name="Runnheim R."/>
            <person name="Forrest D."/>
            <person name="Amos-Landgraf J."/>
            <person name="Schwartz D.C."/>
            <person name="Cheng Z."/>
            <person name="Lindblad-Toh K."/>
            <person name="Eichler E.E."/>
            <person name="Ponting C.P."/>
        </authorList>
    </citation>
    <scope>NUCLEOTIDE SEQUENCE [LARGE SCALE GENOMIC DNA]</scope>
    <source>
        <strain>C57BL/6J</strain>
    </source>
</reference>
<reference key="3">
    <citation type="journal article" date="2010" name="Cell">
        <title>A tissue-specific atlas of mouse protein phosphorylation and expression.</title>
        <authorList>
            <person name="Huttlin E.L."/>
            <person name="Jedrychowski M.P."/>
            <person name="Elias J.E."/>
            <person name="Goswami T."/>
            <person name="Rad R."/>
            <person name="Beausoleil S.A."/>
            <person name="Villen J."/>
            <person name="Haas W."/>
            <person name="Sowa M.E."/>
            <person name="Gygi S.P."/>
        </authorList>
    </citation>
    <scope>PHOSPHORYLATION [LARGE SCALE ANALYSIS] AT SER-314 AND SER-315</scope>
    <scope>IDENTIFICATION BY MASS SPECTROMETRY [LARGE SCALE ANALYSIS]</scope>
    <source>
        <tissue>Lung</tissue>
        <tissue>Spleen</tissue>
    </source>
</reference>
<protein>
    <recommendedName>
        <fullName>Nucleolar MIF4G domain-containing protein 1</fullName>
    </recommendedName>
    <alternativeName>
        <fullName>SGD1 homolog</fullName>
    </alternativeName>
</protein>
<accession>Q3UFM5</accession>
<accession>E9QPB9</accession>
<gene>
    <name type="primary">Nom1</name>
    <name type="synonym">Gm1040</name>
</gene>
<comment type="function">
    <text evidence="1">Plays a role in targeting PPP1CA to the nucleolus.</text>
</comment>
<comment type="subunit">
    <text evidence="1">May interact with EIF4A1, EIF4A2 and EIF4A3. Interacts with PPP1CA and PPP1CC (By similarity).</text>
</comment>
<comment type="subcellular location">
    <subcellularLocation>
        <location evidence="1">Nucleus</location>
        <location evidence="1">Nucleolus</location>
    </subcellularLocation>
</comment>
<comment type="similarity">
    <text evidence="5">Belongs to the CWC22 family.</text>
</comment>
<sequence length="854" mass="95960">MPRNVPEVNGVYRHGACELWCRAMAHALLKRSGVRRGLGGREGPLKRLRLAVEDFVRTTSESEACESRSAVARSRPGGRKSRKELRKEKRHLRKARRLQRTVGSGSGDQGGNVGLNDGPETRRPPTEVRPTPAKATATPAKASAPSTNTKASAAQPKAKAKGAPGKPGPATATARKRALLAANEEEDREIRKLERCLGLHKRKKKGDGSSVPLSFARDGLDYILGALECGSGGGLYESSEEEEEEKLETGQTVLESDLESNSKESEEDPDWQVLQEDQEDVNSKRRGEAESGTRGNKGTKKVRFAEVVEKSRSSSEDDIEQQESHSVESGEKYIPPRLRNEEVIDVHKKEELDRLKKHVKGLINRLSEPNMASISGQLEELYMAHSRKDMNDTLTTALMDACVTASAMPSRLMMEHVFLVSILHHTVGIEVGACFLEAVVKKFDAIYRDGGEGKELDNLFTMIAHLYNFHVVQSILIFDILKKLVGTFTEKDIELILLMLKNVGFALRKDDALSLKELITEAQTQASGAGNKFQDQNRVRFMLETMLALKNNDLRKIPGYNPEPVEKLKKLQRTLVRNAGSGSETRLRISWDGILNAEQTGRWWIVGSAWSGTPMIDNSHHIQLQKPLAGMASSKMLELARKQRMNTDVRRIIFCTLMTSEDFLDAFEKLLKLGLKDQQEREIVHILMDCCLQEKTYNPFYAFLASKFCDYERRFQMTFQFSIWDKFRDLENLPDTKFSNLVHLLAHLLRTKSLPLSVLKVVEFSELDKPRVHFLRRVLTALLMETEDDDLAVIFSRVSDNPKLGMLREGLKLFIGHFLLKHTQAHQSAEEASLLREKAGLASKSLQGKAILRM</sequence>
<keyword id="KW-0539">Nucleus</keyword>
<keyword id="KW-0597">Phosphoprotein</keyword>
<keyword id="KW-1185">Reference proteome</keyword>